<organism>
    <name type="scientific">Xanthomonas oryzae pv. oryzae (strain MAFF 311018)</name>
    <dbReference type="NCBI Taxonomy" id="342109"/>
    <lineage>
        <taxon>Bacteria</taxon>
        <taxon>Pseudomonadati</taxon>
        <taxon>Pseudomonadota</taxon>
        <taxon>Gammaproteobacteria</taxon>
        <taxon>Lysobacterales</taxon>
        <taxon>Lysobacteraceae</taxon>
        <taxon>Xanthomonas</taxon>
    </lineage>
</organism>
<sequence length="143" mass="16409">MSRHYEVVFLVHPDQSEQVPAMIERYKSLIEGGNGTIHRLEDWGRRQLAYPIQNLVKAHYVLLNIEVDQAVLSELVESFRFNDAVLRHLVVKRDGPDTEQSLIMKSKDEKGDKHERSERRRRDDEEGDVPAATDTDGDNAEAA</sequence>
<comment type="function">
    <text evidence="1">Binds together with bS18 to 16S ribosomal RNA.</text>
</comment>
<comment type="similarity">
    <text evidence="1">Belongs to the bacterial ribosomal protein bS6 family.</text>
</comment>
<keyword id="KW-0687">Ribonucleoprotein</keyword>
<keyword id="KW-0689">Ribosomal protein</keyword>
<keyword id="KW-0694">RNA-binding</keyword>
<keyword id="KW-0699">rRNA-binding</keyword>
<proteinExistence type="inferred from homology"/>
<reference key="1">
    <citation type="journal article" date="2005" name="Jpn. Agric. Res. Q.">
        <title>Genome sequence of Xanthomonas oryzae pv. oryzae suggests contribution of large numbers of effector genes and insertion sequences to its race diversity.</title>
        <authorList>
            <person name="Ochiai H."/>
            <person name="Inoue Y."/>
            <person name="Takeya M."/>
            <person name="Sasaki A."/>
            <person name="Kaku H."/>
        </authorList>
    </citation>
    <scope>NUCLEOTIDE SEQUENCE [LARGE SCALE GENOMIC DNA]</scope>
    <source>
        <strain>MAFF 311018</strain>
    </source>
</reference>
<gene>
    <name evidence="1" type="primary">rpsF</name>
    <name type="ordered locus">XOO2294</name>
</gene>
<evidence type="ECO:0000255" key="1">
    <source>
        <dbReference type="HAMAP-Rule" id="MF_00360"/>
    </source>
</evidence>
<evidence type="ECO:0000256" key="2">
    <source>
        <dbReference type="SAM" id="MobiDB-lite"/>
    </source>
</evidence>
<evidence type="ECO:0000305" key="3"/>
<protein>
    <recommendedName>
        <fullName evidence="1">Small ribosomal subunit protein bS6</fullName>
    </recommendedName>
    <alternativeName>
        <fullName evidence="3">30S ribosomal protein S6</fullName>
    </alternativeName>
</protein>
<dbReference type="EMBL" id="AP008229">
    <property type="protein sequence ID" value="BAE69049.1"/>
    <property type="molecule type" value="Genomic_DNA"/>
</dbReference>
<dbReference type="RefSeq" id="WP_011259077.1">
    <property type="nucleotide sequence ID" value="NC_007705.1"/>
</dbReference>
<dbReference type="SMR" id="Q2P328"/>
<dbReference type="KEGG" id="xom:XOO2294"/>
<dbReference type="HOGENOM" id="CLU_113441_6_0_6"/>
<dbReference type="GO" id="GO:0022627">
    <property type="term" value="C:cytosolic small ribosomal subunit"/>
    <property type="evidence" value="ECO:0007669"/>
    <property type="project" value="TreeGrafter"/>
</dbReference>
<dbReference type="GO" id="GO:0070181">
    <property type="term" value="F:small ribosomal subunit rRNA binding"/>
    <property type="evidence" value="ECO:0007669"/>
    <property type="project" value="TreeGrafter"/>
</dbReference>
<dbReference type="GO" id="GO:0003735">
    <property type="term" value="F:structural constituent of ribosome"/>
    <property type="evidence" value="ECO:0007669"/>
    <property type="project" value="InterPro"/>
</dbReference>
<dbReference type="GO" id="GO:0006412">
    <property type="term" value="P:translation"/>
    <property type="evidence" value="ECO:0007669"/>
    <property type="project" value="UniProtKB-UniRule"/>
</dbReference>
<dbReference type="CDD" id="cd00473">
    <property type="entry name" value="bS6"/>
    <property type="match status" value="1"/>
</dbReference>
<dbReference type="FunFam" id="3.30.70.60:FF:000003">
    <property type="entry name" value="30S ribosomal protein S6"/>
    <property type="match status" value="1"/>
</dbReference>
<dbReference type="Gene3D" id="3.30.70.60">
    <property type="match status" value="1"/>
</dbReference>
<dbReference type="HAMAP" id="MF_00360">
    <property type="entry name" value="Ribosomal_bS6"/>
    <property type="match status" value="1"/>
</dbReference>
<dbReference type="InterPro" id="IPR000529">
    <property type="entry name" value="Ribosomal_bS6"/>
</dbReference>
<dbReference type="InterPro" id="IPR035980">
    <property type="entry name" value="Ribosomal_bS6_sf"/>
</dbReference>
<dbReference type="InterPro" id="IPR020814">
    <property type="entry name" value="Ribosomal_S6_plastid/chlpt"/>
</dbReference>
<dbReference type="InterPro" id="IPR014717">
    <property type="entry name" value="Transl_elong_EF1B/ribsomal_bS6"/>
</dbReference>
<dbReference type="NCBIfam" id="TIGR00166">
    <property type="entry name" value="S6"/>
    <property type="match status" value="1"/>
</dbReference>
<dbReference type="PANTHER" id="PTHR21011">
    <property type="entry name" value="MITOCHONDRIAL 28S RIBOSOMAL PROTEIN S6"/>
    <property type="match status" value="1"/>
</dbReference>
<dbReference type="PANTHER" id="PTHR21011:SF1">
    <property type="entry name" value="SMALL RIBOSOMAL SUBUNIT PROTEIN BS6M"/>
    <property type="match status" value="1"/>
</dbReference>
<dbReference type="Pfam" id="PF01250">
    <property type="entry name" value="Ribosomal_S6"/>
    <property type="match status" value="1"/>
</dbReference>
<dbReference type="SUPFAM" id="SSF54995">
    <property type="entry name" value="Ribosomal protein S6"/>
    <property type="match status" value="1"/>
</dbReference>
<feature type="chain" id="PRO_0000229594" description="Small ribosomal subunit protein bS6">
    <location>
        <begin position="1"/>
        <end position="143"/>
    </location>
</feature>
<feature type="region of interest" description="Disordered" evidence="2">
    <location>
        <begin position="97"/>
        <end position="143"/>
    </location>
</feature>
<feature type="compositionally biased region" description="Basic and acidic residues" evidence="2">
    <location>
        <begin position="105"/>
        <end position="124"/>
    </location>
</feature>
<name>RS6_XANOM</name>
<accession>Q2P328</accession>